<name>FABZ_NEIMB</name>
<feature type="chain" id="PRO_0000091703" description="3-hydroxyacyl-[acyl-carrier-protein] dehydratase FabZ">
    <location>
        <begin position="1"/>
        <end position="149"/>
    </location>
</feature>
<feature type="active site" evidence="1">
    <location>
        <position position="53"/>
    </location>
</feature>
<sequence>MDVQLPIEAKDIQKLIPHRYPFLQLDRITAFEPMKTLTAIKNVTINEPQFQGHFPDLPVMPGVLIIEAMAQACGTLAILSEGGRKENEFFFFAGIDEARFKRQVIPGDQLVFEVELLTSRRGIGKFNAVAKVDGQVAVEAIIMCAKRVV</sequence>
<keyword id="KW-0963">Cytoplasm</keyword>
<keyword id="KW-0441">Lipid A biosynthesis</keyword>
<keyword id="KW-0444">Lipid biosynthesis</keyword>
<keyword id="KW-0443">Lipid metabolism</keyword>
<keyword id="KW-0456">Lyase</keyword>
<keyword id="KW-1185">Reference proteome</keyword>
<accession>P95378</accession>
<proteinExistence type="inferred from homology"/>
<protein>
    <recommendedName>
        <fullName evidence="1">3-hydroxyacyl-[acyl-carrier-protein] dehydratase FabZ</fullName>
        <ecNumber evidence="1">4.2.1.59</ecNumber>
    </recommendedName>
    <alternativeName>
        <fullName evidence="1">(3R)-hydroxymyristoyl-[acyl-carrier-protein] dehydratase</fullName>
        <shortName evidence="1">(3R)-hydroxymyristoyl-ACP dehydrase</shortName>
    </alternativeName>
    <alternativeName>
        <fullName evidence="1">Beta-hydroxyacyl-ACP dehydratase</fullName>
    </alternativeName>
</protein>
<dbReference type="EC" id="4.2.1.59" evidence="1"/>
<dbReference type="EMBL" id="U79481">
    <property type="protein sequence ID" value="AAC45423.1"/>
    <property type="molecule type" value="Genomic_DNA"/>
</dbReference>
<dbReference type="EMBL" id="AE002098">
    <property type="protein sequence ID" value="AAF40636.1"/>
    <property type="molecule type" value="Genomic_DNA"/>
</dbReference>
<dbReference type="PIR" id="D81228">
    <property type="entry name" value="D81228"/>
</dbReference>
<dbReference type="RefSeq" id="NP_273237.1">
    <property type="nucleotide sequence ID" value="NC_003112.2"/>
</dbReference>
<dbReference type="RefSeq" id="WP_002218583.1">
    <property type="nucleotide sequence ID" value="NC_003112.2"/>
</dbReference>
<dbReference type="SMR" id="P95378"/>
<dbReference type="FunCoup" id="P95378">
    <property type="interactions" value="431"/>
</dbReference>
<dbReference type="STRING" id="122586.NMB0179"/>
<dbReference type="PaxDb" id="122586-NMB0179"/>
<dbReference type="KEGG" id="nme:NMB0179"/>
<dbReference type="PATRIC" id="fig|122586.8.peg.221"/>
<dbReference type="HOGENOM" id="CLU_078912_1_0_4"/>
<dbReference type="InParanoid" id="P95378"/>
<dbReference type="OrthoDB" id="9772788at2"/>
<dbReference type="Proteomes" id="UP000000425">
    <property type="component" value="Chromosome"/>
</dbReference>
<dbReference type="GO" id="GO:0005737">
    <property type="term" value="C:cytoplasm"/>
    <property type="evidence" value="ECO:0007669"/>
    <property type="project" value="UniProtKB-SubCell"/>
</dbReference>
<dbReference type="GO" id="GO:0016020">
    <property type="term" value="C:membrane"/>
    <property type="evidence" value="ECO:0007669"/>
    <property type="project" value="GOC"/>
</dbReference>
<dbReference type="GO" id="GO:0019171">
    <property type="term" value="F:(3R)-hydroxyacyl-[acyl-carrier-protein] dehydratase activity"/>
    <property type="evidence" value="ECO:0007669"/>
    <property type="project" value="UniProtKB-EC"/>
</dbReference>
<dbReference type="GO" id="GO:0006633">
    <property type="term" value="P:fatty acid biosynthetic process"/>
    <property type="evidence" value="ECO:0007669"/>
    <property type="project" value="UniProtKB-UniRule"/>
</dbReference>
<dbReference type="GO" id="GO:0009245">
    <property type="term" value="P:lipid A biosynthetic process"/>
    <property type="evidence" value="ECO:0007669"/>
    <property type="project" value="UniProtKB-UniRule"/>
</dbReference>
<dbReference type="CDD" id="cd01288">
    <property type="entry name" value="FabZ"/>
    <property type="match status" value="1"/>
</dbReference>
<dbReference type="FunFam" id="3.10.129.10:FF:000001">
    <property type="entry name" value="3-hydroxyacyl-[acyl-carrier-protein] dehydratase FabZ"/>
    <property type="match status" value="1"/>
</dbReference>
<dbReference type="Gene3D" id="3.10.129.10">
    <property type="entry name" value="Hotdog Thioesterase"/>
    <property type="match status" value="1"/>
</dbReference>
<dbReference type="HAMAP" id="MF_00406">
    <property type="entry name" value="FabZ"/>
    <property type="match status" value="1"/>
</dbReference>
<dbReference type="InterPro" id="IPR013114">
    <property type="entry name" value="FabA_FabZ"/>
</dbReference>
<dbReference type="InterPro" id="IPR010084">
    <property type="entry name" value="FabZ"/>
</dbReference>
<dbReference type="InterPro" id="IPR029069">
    <property type="entry name" value="HotDog_dom_sf"/>
</dbReference>
<dbReference type="NCBIfam" id="TIGR01750">
    <property type="entry name" value="fabZ"/>
    <property type="match status" value="1"/>
</dbReference>
<dbReference type="NCBIfam" id="NF000582">
    <property type="entry name" value="PRK00006.1"/>
    <property type="match status" value="1"/>
</dbReference>
<dbReference type="PANTHER" id="PTHR30272">
    <property type="entry name" value="3-HYDROXYACYL-[ACYL-CARRIER-PROTEIN] DEHYDRATASE"/>
    <property type="match status" value="1"/>
</dbReference>
<dbReference type="PANTHER" id="PTHR30272:SF1">
    <property type="entry name" value="3-HYDROXYACYL-[ACYL-CARRIER-PROTEIN] DEHYDRATASE"/>
    <property type="match status" value="1"/>
</dbReference>
<dbReference type="Pfam" id="PF07977">
    <property type="entry name" value="FabA"/>
    <property type="match status" value="1"/>
</dbReference>
<dbReference type="SUPFAM" id="SSF54637">
    <property type="entry name" value="Thioesterase/thiol ester dehydrase-isomerase"/>
    <property type="match status" value="1"/>
</dbReference>
<comment type="function">
    <text evidence="1">Involved in unsaturated fatty acids biosynthesis. Catalyzes the dehydration of short chain beta-hydroxyacyl-ACPs and long chain saturated and unsaturated beta-hydroxyacyl-ACPs.</text>
</comment>
<comment type="catalytic activity">
    <reaction evidence="1">
        <text>a (3R)-hydroxyacyl-[ACP] = a (2E)-enoyl-[ACP] + H2O</text>
        <dbReference type="Rhea" id="RHEA:13097"/>
        <dbReference type="Rhea" id="RHEA-COMP:9925"/>
        <dbReference type="Rhea" id="RHEA-COMP:9945"/>
        <dbReference type="ChEBI" id="CHEBI:15377"/>
        <dbReference type="ChEBI" id="CHEBI:78784"/>
        <dbReference type="ChEBI" id="CHEBI:78827"/>
        <dbReference type="EC" id="4.2.1.59"/>
    </reaction>
</comment>
<comment type="subcellular location">
    <subcellularLocation>
        <location evidence="1">Cytoplasm</location>
    </subcellularLocation>
</comment>
<comment type="similarity">
    <text evidence="1">Belongs to the thioester dehydratase family. FabZ subfamily.</text>
</comment>
<gene>
    <name evidence="1" type="primary">fabZ</name>
    <name type="ordered locus">NMB0179</name>
</gene>
<evidence type="ECO:0000255" key="1">
    <source>
        <dbReference type="HAMAP-Rule" id="MF_00406"/>
    </source>
</evidence>
<organism>
    <name type="scientific">Neisseria meningitidis serogroup B (strain ATCC BAA-335 / MC58)</name>
    <dbReference type="NCBI Taxonomy" id="122586"/>
    <lineage>
        <taxon>Bacteria</taxon>
        <taxon>Pseudomonadati</taxon>
        <taxon>Pseudomonadota</taxon>
        <taxon>Betaproteobacteria</taxon>
        <taxon>Neisseriales</taxon>
        <taxon>Neisseriaceae</taxon>
        <taxon>Neisseria</taxon>
    </lineage>
</organism>
<reference key="1">
    <citation type="journal article" date="1997" name="Gene">
        <title>Isolation and characterization of the Neisseria meningitidis lpxD-fabZ-lpxA gene cluster involved in lipid A biosynthesis.</title>
        <authorList>
            <person name="Steeghs L."/>
            <person name="Jennings M.P."/>
            <person name="Poolman J.T."/>
            <person name="Der Ley P."/>
        </authorList>
    </citation>
    <scope>NUCLEOTIDE SEQUENCE [GENOMIC DNA]</scope>
    <source>
        <strain>ATCC BAA-335 / MC58</strain>
    </source>
</reference>
<reference key="2">
    <citation type="journal article" date="2000" name="Science">
        <title>Complete genome sequence of Neisseria meningitidis serogroup B strain MC58.</title>
        <authorList>
            <person name="Tettelin H."/>
            <person name="Saunders N.J."/>
            <person name="Heidelberg J.F."/>
            <person name="Jeffries A.C."/>
            <person name="Nelson K.E."/>
            <person name="Eisen J.A."/>
            <person name="Ketchum K.A."/>
            <person name="Hood D.W."/>
            <person name="Peden J.F."/>
            <person name="Dodson R.J."/>
            <person name="Nelson W.C."/>
            <person name="Gwinn M.L."/>
            <person name="DeBoy R.T."/>
            <person name="Peterson J.D."/>
            <person name="Hickey E.K."/>
            <person name="Haft D.H."/>
            <person name="Salzberg S.L."/>
            <person name="White O."/>
            <person name="Fleischmann R.D."/>
            <person name="Dougherty B.A."/>
            <person name="Mason T.M."/>
            <person name="Ciecko A."/>
            <person name="Parksey D.S."/>
            <person name="Blair E."/>
            <person name="Cittone H."/>
            <person name="Clark E.B."/>
            <person name="Cotton M.D."/>
            <person name="Utterback T.R."/>
            <person name="Khouri H.M."/>
            <person name="Qin H."/>
            <person name="Vamathevan J.J."/>
            <person name="Gill J."/>
            <person name="Scarlato V."/>
            <person name="Masignani V."/>
            <person name="Pizza M."/>
            <person name="Grandi G."/>
            <person name="Sun L."/>
            <person name="Smith H.O."/>
            <person name="Fraser C.M."/>
            <person name="Moxon E.R."/>
            <person name="Rappuoli R."/>
            <person name="Venter J.C."/>
        </authorList>
    </citation>
    <scope>NUCLEOTIDE SEQUENCE [LARGE SCALE GENOMIC DNA]</scope>
    <source>
        <strain>ATCC BAA-335 / MC58</strain>
    </source>
</reference>